<organism>
    <name type="scientific">Homo sapiens</name>
    <name type="common">Human</name>
    <dbReference type="NCBI Taxonomy" id="9606"/>
    <lineage>
        <taxon>Eukaryota</taxon>
        <taxon>Metazoa</taxon>
        <taxon>Chordata</taxon>
        <taxon>Craniata</taxon>
        <taxon>Vertebrata</taxon>
        <taxon>Euteleostomi</taxon>
        <taxon>Mammalia</taxon>
        <taxon>Eutheria</taxon>
        <taxon>Euarchontoglires</taxon>
        <taxon>Primates</taxon>
        <taxon>Haplorrhini</taxon>
        <taxon>Catarrhini</taxon>
        <taxon>Hominidae</taxon>
        <taxon>Homo</taxon>
    </lineage>
</organism>
<protein>
    <recommendedName>
        <fullName>Putative uncharacterized protein encoded by LINC02877</fullName>
    </recommendedName>
</protein>
<name>CC079_HUMAN</name>
<feature type="chain" id="PRO_0000392537" description="Putative uncharacterized protein encoded by LINC02877">
    <location>
        <begin position="1"/>
        <end position="100"/>
    </location>
</feature>
<sequence length="100" mass="11337">MHVCDLQKLVRIQLAFTTFPWMFSCHLLPTPELSSKRNQCLLYKTSGCLTQMPILYGHPATLLKDYILQAILQPGKKIQGGTEIQRGSFANQYQTDASHL</sequence>
<evidence type="ECO:0000305" key="1"/>
<evidence type="ECO:0000312" key="2">
    <source>
        <dbReference type="HGNC" id="HGNC:37259"/>
    </source>
</evidence>
<accession>P0CE67</accession>
<proteinExistence type="uncertain"/>
<keyword id="KW-1185">Reference proteome</keyword>
<comment type="caution">
    <text evidence="1">Product of a dubious CDS prediction. Probable non-coding RNA.</text>
</comment>
<reference key="1">
    <citation type="submission" date="1998-08" db="EMBL/GenBank/DDBJ databases">
        <title>Full clone sequencing of the longest available member from each UniGene cluster.</title>
        <authorList>
            <person name="Woessner J."/>
            <person name="Tan F."/>
            <person name="Marra M."/>
            <person name="Kucaba T."/>
            <person name="Yandell M."/>
            <person name="Martin J."/>
            <person name="Marth G."/>
            <person name="Bowles L."/>
            <person name="Wylie T."/>
            <person name="Bowers Y."/>
            <person name="Steptoe M."/>
            <person name="Theising B."/>
            <person name="Geisel S."/>
            <person name="Allen M."/>
            <person name="Underwood K."/>
            <person name="Chappell J."/>
            <person name="Person B."/>
            <person name="Gibbons M."/>
            <person name="Harvey N."/>
            <person name="Pape D."/>
            <person name="Chamberlain A."/>
            <person name="Morales R."/>
            <person name="Schurk R."/>
            <person name="Ritter E."/>
            <person name="Kohn S."/>
            <person name="Swaller T."/>
            <person name="Behymer K."/>
            <person name="Hillier L."/>
            <person name="Wilson R."/>
            <person name="Waterston R."/>
        </authorList>
    </citation>
    <scope>NUCLEOTIDE SEQUENCE [LARGE SCALE MRNA]</scope>
</reference>
<reference key="2">
    <citation type="journal article" date="2006" name="Nature">
        <title>The DNA sequence, annotation and analysis of human chromosome 3.</title>
        <authorList>
            <person name="Muzny D.M."/>
            <person name="Scherer S.E."/>
            <person name="Kaul R."/>
            <person name="Wang J."/>
            <person name="Yu J."/>
            <person name="Sudbrak R."/>
            <person name="Buhay C.J."/>
            <person name="Chen R."/>
            <person name="Cree A."/>
            <person name="Ding Y."/>
            <person name="Dugan-Rocha S."/>
            <person name="Gill R."/>
            <person name="Gunaratne P."/>
            <person name="Harris R.A."/>
            <person name="Hawes A.C."/>
            <person name="Hernandez J."/>
            <person name="Hodgson A.V."/>
            <person name="Hume J."/>
            <person name="Jackson A."/>
            <person name="Khan Z.M."/>
            <person name="Kovar-Smith C."/>
            <person name="Lewis L.R."/>
            <person name="Lozado R.J."/>
            <person name="Metzker M.L."/>
            <person name="Milosavljevic A."/>
            <person name="Miner G.R."/>
            <person name="Morgan M.B."/>
            <person name="Nazareth L.V."/>
            <person name="Scott G."/>
            <person name="Sodergren E."/>
            <person name="Song X.-Z."/>
            <person name="Steffen D."/>
            <person name="Wei S."/>
            <person name="Wheeler D.A."/>
            <person name="Wright M.W."/>
            <person name="Worley K.C."/>
            <person name="Yuan Y."/>
            <person name="Zhang Z."/>
            <person name="Adams C.Q."/>
            <person name="Ansari-Lari M.A."/>
            <person name="Ayele M."/>
            <person name="Brown M.J."/>
            <person name="Chen G."/>
            <person name="Chen Z."/>
            <person name="Clendenning J."/>
            <person name="Clerc-Blankenburg K.P."/>
            <person name="Chen R."/>
            <person name="Chen Z."/>
            <person name="Davis C."/>
            <person name="Delgado O."/>
            <person name="Dinh H.H."/>
            <person name="Dong W."/>
            <person name="Draper H."/>
            <person name="Ernst S."/>
            <person name="Fu G."/>
            <person name="Gonzalez-Garay M.L."/>
            <person name="Garcia D.K."/>
            <person name="Gillett W."/>
            <person name="Gu J."/>
            <person name="Hao B."/>
            <person name="Haugen E."/>
            <person name="Havlak P."/>
            <person name="He X."/>
            <person name="Hennig S."/>
            <person name="Hu S."/>
            <person name="Huang W."/>
            <person name="Jackson L.R."/>
            <person name="Jacob L.S."/>
            <person name="Kelly S.H."/>
            <person name="Kube M."/>
            <person name="Levy R."/>
            <person name="Li Z."/>
            <person name="Liu B."/>
            <person name="Liu J."/>
            <person name="Liu W."/>
            <person name="Lu J."/>
            <person name="Maheshwari M."/>
            <person name="Nguyen B.-V."/>
            <person name="Okwuonu G.O."/>
            <person name="Palmeiri A."/>
            <person name="Pasternak S."/>
            <person name="Perez L.M."/>
            <person name="Phelps K.A."/>
            <person name="Plopper F.J."/>
            <person name="Qiang B."/>
            <person name="Raymond C."/>
            <person name="Rodriguez R."/>
            <person name="Saenphimmachak C."/>
            <person name="Santibanez J."/>
            <person name="Shen H."/>
            <person name="Shen Y."/>
            <person name="Subramanian S."/>
            <person name="Tabor P.E."/>
            <person name="Verduzco D."/>
            <person name="Waldron L."/>
            <person name="Wang J."/>
            <person name="Wang J."/>
            <person name="Wang Q."/>
            <person name="Williams G.A."/>
            <person name="Wong G.K.-S."/>
            <person name="Yao Z."/>
            <person name="Zhang J."/>
            <person name="Zhang X."/>
            <person name="Zhao G."/>
            <person name="Zhou J."/>
            <person name="Zhou Y."/>
            <person name="Nelson D."/>
            <person name="Lehrach H."/>
            <person name="Reinhardt R."/>
            <person name="Naylor S.L."/>
            <person name="Yang H."/>
            <person name="Olson M."/>
            <person name="Weinstock G."/>
            <person name="Gibbs R.A."/>
        </authorList>
    </citation>
    <scope>NUCLEOTIDE SEQUENCE [LARGE SCALE GENOMIC DNA]</scope>
</reference>
<dbReference type="EMBL" id="AF086445">
    <property type="status" value="NOT_ANNOTATED_CDS"/>
    <property type="molecule type" value="mRNA"/>
</dbReference>
<dbReference type="EMBL" id="AC078788">
    <property type="status" value="NOT_ANNOTATED_CDS"/>
    <property type="molecule type" value="Genomic_DNA"/>
</dbReference>
<dbReference type="RefSeq" id="NP_001094807.1">
    <property type="nucleotide sequence ID" value="NM_001101337.1"/>
</dbReference>
<dbReference type="iPTMnet" id="P0CE67"/>
<dbReference type="PhosphoSitePlus" id="P0CE67"/>
<dbReference type="BioMuta" id="HGNC:37259"/>
<dbReference type="PaxDb" id="9606-ENSP00000389475"/>
<dbReference type="AGR" id="HGNC:37259"/>
<dbReference type="GeneCards" id="LINC02877"/>
<dbReference type="HGNC" id="HGNC:37259">
    <property type="gene designation" value="LINC02877"/>
</dbReference>
<dbReference type="neXtProt" id="NX_P0CE67"/>
<dbReference type="eggNOG" id="ENOG502TH6T">
    <property type="taxonomic scope" value="Eukaryota"/>
</dbReference>
<dbReference type="InParanoid" id="P0CE67"/>
<dbReference type="PAN-GO" id="P0CE67">
    <property type="GO annotations" value="0 GO annotations based on evolutionary models"/>
</dbReference>
<dbReference type="PhylomeDB" id="P0CE67"/>
<dbReference type="PathwayCommons" id="P0CE67"/>
<dbReference type="BioGRID-ORCS" id="152118">
    <property type="hits" value="6 hits in 1031 CRISPR screens"/>
</dbReference>
<dbReference type="GenomeRNAi" id="152118"/>
<dbReference type="Pharos" id="P0CE67">
    <property type="development level" value="Tdark"/>
</dbReference>
<dbReference type="Proteomes" id="UP000005640">
    <property type="component" value="Unplaced"/>
</dbReference>
<dbReference type="RNAct" id="P0CE67">
    <property type="molecule type" value="protein"/>
</dbReference>
<gene>
    <name evidence="2" type="primary">LINC02877</name>
    <name evidence="2" type="synonym">C3orf79</name>
</gene>